<protein>
    <recommendedName>
        <fullName>rRNA-processing protein efg1</fullName>
    </recommendedName>
</protein>
<evidence type="ECO:0000250" key="1"/>
<evidence type="ECO:0000255" key="2"/>
<evidence type="ECO:0000256" key="3">
    <source>
        <dbReference type="SAM" id="MobiDB-lite"/>
    </source>
</evidence>
<evidence type="ECO:0000305" key="4"/>
<reference key="1">
    <citation type="journal article" date="2011" name="PLoS Genet.">
        <title>Genomic analysis of the necrotrophic fungal pathogens Sclerotinia sclerotiorum and Botrytis cinerea.</title>
        <authorList>
            <person name="Amselem J."/>
            <person name="Cuomo C.A."/>
            <person name="van Kan J.A.L."/>
            <person name="Viaud M."/>
            <person name="Benito E.P."/>
            <person name="Couloux A."/>
            <person name="Coutinho P.M."/>
            <person name="de Vries R.P."/>
            <person name="Dyer P.S."/>
            <person name="Fillinger S."/>
            <person name="Fournier E."/>
            <person name="Gout L."/>
            <person name="Hahn M."/>
            <person name="Kohn L."/>
            <person name="Lapalu N."/>
            <person name="Plummer K.M."/>
            <person name="Pradier J.-M."/>
            <person name="Quevillon E."/>
            <person name="Sharon A."/>
            <person name="Simon A."/>
            <person name="ten Have A."/>
            <person name="Tudzynski B."/>
            <person name="Tudzynski P."/>
            <person name="Wincker P."/>
            <person name="Andrew M."/>
            <person name="Anthouard V."/>
            <person name="Beever R.E."/>
            <person name="Beffa R."/>
            <person name="Benoit I."/>
            <person name="Bouzid O."/>
            <person name="Brault B."/>
            <person name="Chen Z."/>
            <person name="Choquer M."/>
            <person name="Collemare J."/>
            <person name="Cotton P."/>
            <person name="Danchin E.G."/>
            <person name="Da Silva C."/>
            <person name="Gautier A."/>
            <person name="Giraud C."/>
            <person name="Giraud T."/>
            <person name="Gonzalez C."/>
            <person name="Grossetete S."/>
            <person name="Gueldener U."/>
            <person name="Henrissat B."/>
            <person name="Howlett B.J."/>
            <person name="Kodira C."/>
            <person name="Kretschmer M."/>
            <person name="Lappartient A."/>
            <person name="Leroch M."/>
            <person name="Levis C."/>
            <person name="Mauceli E."/>
            <person name="Neuveglise C."/>
            <person name="Oeser B."/>
            <person name="Pearson M."/>
            <person name="Poulain J."/>
            <person name="Poussereau N."/>
            <person name="Quesneville H."/>
            <person name="Rascle C."/>
            <person name="Schumacher J."/>
            <person name="Segurens B."/>
            <person name="Sexton A."/>
            <person name="Silva E."/>
            <person name="Sirven C."/>
            <person name="Soanes D.M."/>
            <person name="Talbot N.J."/>
            <person name="Templeton M."/>
            <person name="Yandava C."/>
            <person name="Yarden O."/>
            <person name="Zeng Q."/>
            <person name="Rollins J.A."/>
            <person name="Lebrun M.-H."/>
            <person name="Dickman M."/>
        </authorList>
    </citation>
    <scope>NUCLEOTIDE SEQUENCE [LARGE SCALE GENOMIC DNA]</scope>
    <source>
        <strain>B05.10</strain>
    </source>
</reference>
<reference key="2">
    <citation type="journal article" date="2012" name="Eukaryot. Cell">
        <title>Genome update of Botrytis cinerea strains B05.10 and T4.</title>
        <authorList>
            <person name="Staats M."/>
            <person name="van Kan J.A.L."/>
        </authorList>
    </citation>
    <scope>NUCLEOTIDE SEQUENCE [LARGE SCALE GENOMIC DNA]</scope>
    <scope>GENOME REANNOTATION</scope>
    <source>
        <strain>B05.10</strain>
    </source>
</reference>
<reference key="3">
    <citation type="journal article" date="2017" name="Mol. Plant Pathol.">
        <title>A gapless genome sequence of the fungus Botrytis cinerea.</title>
        <authorList>
            <person name="van Kan J.A.L."/>
            <person name="Stassen J.H.M."/>
            <person name="Mosbach A."/>
            <person name="van der Lee T.A.J."/>
            <person name="Faino L."/>
            <person name="Farmer A.D."/>
            <person name="Papasotiriou D.G."/>
            <person name="Zhou S."/>
            <person name="Seidl M.F."/>
            <person name="Cottam E."/>
            <person name="Edel D."/>
            <person name="Hahn M."/>
            <person name="Schwartz D.C."/>
            <person name="Dietrich R.A."/>
            <person name="Widdison S."/>
            <person name="Scalliet G."/>
        </authorList>
    </citation>
    <scope>NUCLEOTIDE SEQUENCE [LARGE SCALE GENOMIC DNA]</scope>
    <scope>GENOME REANNOTATION</scope>
    <source>
        <strain>B05.10</strain>
    </source>
</reference>
<sequence length="305" mass="34819">MAPKRKLSDSDAPEVVHPSRQVQVYGDEPKPAKKRKSEPAFNKKQAHASSVNTIKKKIRDITRKLERAQDLPADVRVEDERALAAYQQELASAEAEKIRQKMIKKYHMVRFFERQKATRQLKKLRKRLLDSESTEEVEQLKDEMHILEVDLNYTQYHPLSETYISLYPPKGSGEDAEVKATKEKPPMWKEVEKCMEEGTLDRLRNRKPEATVSTTKPVRLPERKLVKPKSIPKPKPVEQAPAIDTTGMNRRQRRAQRGVKDSRATKIAKNKSTGFSKNQAFGAVEGARADEAQDGNVSDGGFFEE</sequence>
<dbReference type="EMBL" id="CP009814">
    <property type="protein sequence ID" value="ATZ54225.1"/>
    <property type="molecule type" value="Genomic_DNA"/>
</dbReference>
<dbReference type="SMR" id="A6RVU0"/>
<dbReference type="EnsemblFungi" id="Bcin10g02410.1">
    <property type="protein sequence ID" value="Bcin10p02410.1"/>
    <property type="gene ID" value="Bcin10g02410"/>
</dbReference>
<dbReference type="GeneID" id="5437596"/>
<dbReference type="KEGG" id="bfu:BCIN_10g02410"/>
<dbReference type="VEuPathDB" id="FungiDB:Bcin10g02410"/>
<dbReference type="OMA" id="KCMEEGT"/>
<dbReference type="OrthoDB" id="47732at2759"/>
<dbReference type="Proteomes" id="UP000001798">
    <property type="component" value="Chromosome bcin10"/>
</dbReference>
<dbReference type="GO" id="GO:0005730">
    <property type="term" value="C:nucleolus"/>
    <property type="evidence" value="ECO:0007669"/>
    <property type="project" value="UniProtKB-SubCell"/>
</dbReference>
<dbReference type="GO" id="GO:0030688">
    <property type="term" value="C:preribosome, small subunit precursor"/>
    <property type="evidence" value="ECO:0007669"/>
    <property type="project" value="TreeGrafter"/>
</dbReference>
<dbReference type="GO" id="GO:0000462">
    <property type="term" value="P:maturation of SSU-rRNA from tricistronic rRNA transcript (SSU-rRNA, 5.8S rRNA, LSU-rRNA)"/>
    <property type="evidence" value="ECO:0007669"/>
    <property type="project" value="TreeGrafter"/>
</dbReference>
<dbReference type="InterPro" id="IPR019310">
    <property type="entry name" value="Efg1"/>
</dbReference>
<dbReference type="InterPro" id="IPR050786">
    <property type="entry name" value="EFG1_rRNA-proc"/>
</dbReference>
<dbReference type="PANTHER" id="PTHR33911">
    <property type="entry name" value="RRNA-PROCESSING PROTEIN EFG1"/>
    <property type="match status" value="1"/>
</dbReference>
<dbReference type="PANTHER" id="PTHR33911:SF1">
    <property type="entry name" value="RRNA-PROCESSING PROTEIN EFG1"/>
    <property type="match status" value="1"/>
</dbReference>
<dbReference type="Pfam" id="PF10153">
    <property type="entry name" value="Efg1"/>
    <property type="match status" value="1"/>
</dbReference>
<organism>
    <name type="scientific">Botryotinia fuckeliana (strain B05.10)</name>
    <name type="common">Noble rot fungus</name>
    <name type="synonym">Botrytis cinerea</name>
    <dbReference type="NCBI Taxonomy" id="332648"/>
    <lineage>
        <taxon>Eukaryota</taxon>
        <taxon>Fungi</taxon>
        <taxon>Dikarya</taxon>
        <taxon>Ascomycota</taxon>
        <taxon>Pezizomycotina</taxon>
        <taxon>Leotiomycetes</taxon>
        <taxon>Helotiales</taxon>
        <taxon>Sclerotiniaceae</taxon>
        <taxon>Botrytis</taxon>
    </lineage>
</organism>
<name>EFG1P_BOTFB</name>
<keyword id="KW-0175">Coiled coil</keyword>
<keyword id="KW-0539">Nucleus</keyword>
<keyword id="KW-1185">Reference proteome</keyword>
<keyword id="KW-0698">rRNA processing</keyword>
<gene>
    <name type="primary">efg1</name>
    <name type="ORF">BC1G_04727</name>
    <name type="ORF">BCIN_10g02410</name>
</gene>
<comment type="function">
    <text evidence="1">Involved in rRNA processing.</text>
</comment>
<comment type="subcellular location">
    <subcellularLocation>
        <location evidence="1">Nucleus</location>
        <location evidence="1">Nucleolus</location>
    </subcellularLocation>
</comment>
<comment type="similarity">
    <text evidence="4">Belongs to the EFG1 family.</text>
</comment>
<proteinExistence type="inferred from homology"/>
<accession>A6RVU0</accession>
<accession>A0A384JUG6</accession>
<feature type="chain" id="PRO_0000330264" description="rRNA-processing protein efg1">
    <location>
        <begin position="1"/>
        <end position="305"/>
    </location>
</feature>
<feature type="region of interest" description="Disordered" evidence="3">
    <location>
        <begin position="1"/>
        <end position="52"/>
    </location>
</feature>
<feature type="region of interest" description="Disordered" evidence="3">
    <location>
        <begin position="199"/>
        <end position="305"/>
    </location>
</feature>
<feature type="coiled-coil region" evidence="2">
    <location>
        <begin position="49"/>
        <end position="155"/>
    </location>
</feature>
<feature type="compositionally biased region" description="Basic and acidic residues" evidence="3">
    <location>
        <begin position="199"/>
        <end position="209"/>
    </location>
</feature>
<feature type="compositionally biased region" description="Polar residues" evidence="3">
    <location>
        <begin position="270"/>
        <end position="279"/>
    </location>
</feature>